<keyword id="KW-0687">Ribonucleoprotein</keyword>
<keyword id="KW-0689">Ribosomal protein</keyword>
<keyword id="KW-0694">RNA-binding</keyword>
<keyword id="KW-0699">rRNA-binding</keyword>
<dbReference type="EMBL" id="CP000408">
    <property type="protein sequence ID" value="ABP92991.1"/>
    <property type="molecule type" value="Genomic_DNA"/>
</dbReference>
<dbReference type="SMR" id="A4W3Q2"/>
<dbReference type="KEGG" id="ssv:SSU98_1833"/>
<dbReference type="HOGENOM" id="CLU_113441_5_3_9"/>
<dbReference type="GO" id="GO:0005737">
    <property type="term" value="C:cytoplasm"/>
    <property type="evidence" value="ECO:0007669"/>
    <property type="project" value="UniProtKB-ARBA"/>
</dbReference>
<dbReference type="GO" id="GO:1990904">
    <property type="term" value="C:ribonucleoprotein complex"/>
    <property type="evidence" value="ECO:0007669"/>
    <property type="project" value="UniProtKB-KW"/>
</dbReference>
<dbReference type="GO" id="GO:0005840">
    <property type="term" value="C:ribosome"/>
    <property type="evidence" value="ECO:0007669"/>
    <property type="project" value="UniProtKB-KW"/>
</dbReference>
<dbReference type="GO" id="GO:0070181">
    <property type="term" value="F:small ribosomal subunit rRNA binding"/>
    <property type="evidence" value="ECO:0007669"/>
    <property type="project" value="TreeGrafter"/>
</dbReference>
<dbReference type="GO" id="GO:0003735">
    <property type="term" value="F:structural constituent of ribosome"/>
    <property type="evidence" value="ECO:0007669"/>
    <property type="project" value="InterPro"/>
</dbReference>
<dbReference type="GO" id="GO:0006412">
    <property type="term" value="P:translation"/>
    <property type="evidence" value="ECO:0007669"/>
    <property type="project" value="UniProtKB-UniRule"/>
</dbReference>
<dbReference type="CDD" id="cd00473">
    <property type="entry name" value="bS6"/>
    <property type="match status" value="1"/>
</dbReference>
<dbReference type="FunFam" id="3.30.70.60:FF:000002">
    <property type="entry name" value="30S ribosomal protein S6"/>
    <property type="match status" value="1"/>
</dbReference>
<dbReference type="Gene3D" id="3.30.70.60">
    <property type="match status" value="1"/>
</dbReference>
<dbReference type="HAMAP" id="MF_00360">
    <property type="entry name" value="Ribosomal_bS6"/>
    <property type="match status" value="1"/>
</dbReference>
<dbReference type="InterPro" id="IPR000529">
    <property type="entry name" value="Ribosomal_bS6"/>
</dbReference>
<dbReference type="InterPro" id="IPR035980">
    <property type="entry name" value="Ribosomal_bS6_sf"/>
</dbReference>
<dbReference type="InterPro" id="IPR020814">
    <property type="entry name" value="Ribosomal_S6_plastid/chlpt"/>
</dbReference>
<dbReference type="InterPro" id="IPR014717">
    <property type="entry name" value="Transl_elong_EF1B/ribsomal_bS6"/>
</dbReference>
<dbReference type="NCBIfam" id="TIGR00166">
    <property type="entry name" value="S6"/>
    <property type="match status" value="1"/>
</dbReference>
<dbReference type="PANTHER" id="PTHR21011">
    <property type="entry name" value="MITOCHONDRIAL 28S RIBOSOMAL PROTEIN S6"/>
    <property type="match status" value="1"/>
</dbReference>
<dbReference type="PANTHER" id="PTHR21011:SF1">
    <property type="entry name" value="SMALL RIBOSOMAL SUBUNIT PROTEIN BS6M"/>
    <property type="match status" value="1"/>
</dbReference>
<dbReference type="Pfam" id="PF01250">
    <property type="entry name" value="Ribosomal_S6"/>
    <property type="match status" value="1"/>
</dbReference>
<dbReference type="SUPFAM" id="SSF54995">
    <property type="entry name" value="Ribosomal protein S6"/>
    <property type="match status" value="1"/>
</dbReference>
<gene>
    <name evidence="1" type="primary">rpsF</name>
    <name type="ordered locus">SSU98_1833</name>
</gene>
<protein>
    <recommendedName>
        <fullName evidence="1">Small ribosomal subunit protein bS6</fullName>
    </recommendedName>
    <alternativeName>
        <fullName evidence="2">30S ribosomal protein S6</fullName>
    </alternativeName>
</protein>
<reference key="1">
    <citation type="journal article" date="2007" name="PLoS ONE">
        <title>A glimpse of streptococcal toxic shock syndrome from comparative genomics of S. suis 2 Chinese isolates.</title>
        <authorList>
            <person name="Chen C."/>
            <person name="Tang J."/>
            <person name="Dong W."/>
            <person name="Wang C."/>
            <person name="Feng Y."/>
            <person name="Wang J."/>
            <person name="Zheng F."/>
            <person name="Pan X."/>
            <person name="Liu D."/>
            <person name="Li M."/>
            <person name="Song Y."/>
            <person name="Zhu X."/>
            <person name="Sun H."/>
            <person name="Feng T."/>
            <person name="Guo Z."/>
            <person name="Ju A."/>
            <person name="Ge J."/>
            <person name="Dong Y."/>
            <person name="Sun W."/>
            <person name="Jiang Y."/>
            <person name="Wang J."/>
            <person name="Yan J."/>
            <person name="Yang H."/>
            <person name="Wang X."/>
            <person name="Gao G.F."/>
            <person name="Yang R."/>
            <person name="Wang J."/>
            <person name="Yu J."/>
        </authorList>
    </citation>
    <scope>NUCLEOTIDE SEQUENCE [LARGE SCALE GENOMIC DNA]</scope>
    <source>
        <strain>98HAH33</strain>
    </source>
</reference>
<feature type="chain" id="PRO_1000005368" description="Small ribosomal subunit protein bS6">
    <location>
        <begin position="1"/>
        <end position="96"/>
    </location>
</feature>
<sequence>MAKYEILYIIRPNIEEEAKNALVARFDSILTDNGATIVESKAWEKRRLAYEIKDFREGLYHIVNVEANNDEALKEFDRLSKINGDILRHMIVKLDA</sequence>
<name>RS6_STRS2</name>
<organism>
    <name type="scientific">Streptococcus suis (strain 98HAH33)</name>
    <dbReference type="NCBI Taxonomy" id="391296"/>
    <lineage>
        <taxon>Bacteria</taxon>
        <taxon>Bacillati</taxon>
        <taxon>Bacillota</taxon>
        <taxon>Bacilli</taxon>
        <taxon>Lactobacillales</taxon>
        <taxon>Streptococcaceae</taxon>
        <taxon>Streptococcus</taxon>
    </lineage>
</organism>
<evidence type="ECO:0000255" key="1">
    <source>
        <dbReference type="HAMAP-Rule" id="MF_00360"/>
    </source>
</evidence>
<evidence type="ECO:0000305" key="2"/>
<proteinExistence type="inferred from homology"/>
<accession>A4W3Q2</accession>
<comment type="function">
    <text evidence="1">Binds together with bS18 to 16S ribosomal RNA.</text>
</comment>
<comment type="similarity">
    <text evidence="1">Belongs to the bacterial ribosomal protein bS6 family.</text>
</comment>